<feature type="signal peptide" evidence="1">
    <location>
        <begin position="1"/>
        <end position="24"/>
    </location>
</feature>
<feature type="chain" id="PRO_5011408366" description="Salivary endonuclease" evidence="1">
    <location>
        <begin position="25"/>
        <end position="364"/>
    </location>
</feature>
<feature type="glycosylation site" description="N-linked (GlcNAc...) asparagine" evidence="2">
    <location>
        <position position="285"/>
    </location>
</feature>
<feature type="sequence conflict" description="In Ref. 2; AAR18449." evidence="6" ref="2">
    <original>SSFF</original>
    <variation>ISFL</variation>
    <location>
        <begin position="2"/>
        <end position="5"/>
    </location>
</feature>
<feature type="sequence conflict" description="In Ref. 2; AAR18449." evidence="6" ref="2">
    <original>Y</original>
    <variation>H</variation>
    <location>
        <position position="67"/>
    </location>
</feature>
<feature type="sequence conflict" description="In Ref. 2; AAR18449." evidence="6" ref="2">
    <original>V</original>
    <variation>A</variation>
    <location>
        <position position="92"/>
    </location>
</feature>
<feature type="sequence conflict" description="In Ref. 2; AAR18449." evidence="6" ref="2">
    <original>I</original>
    <variation>L</variation>
    <location>
        <position position="102"/>
    </location>
</feature>
<reference evidence="9" key="1">
    <citation type="submission" date="2007-03" db="EMBL/GenBank/DDBJ databases">
        <title>Annotation of Culex pipiens quinquefasciatus.</title>
        <authorList>
            <consortium name="The Broad Institute Genome Sequencing Platform"/>
            <person name="Atkinson P.W."/>
            <person name="Hemingway J."/>
            <person name="Christensen B.M."/>
            <person name="Higgs S."/>
            <person name="Kodira C."/>
            <person name="Hannick L."/>
            <person name="Megy K."/>
            <person name="O'Leary S."/>
            <person name="Pearson M."/>
            <person name="Haas B.J."/>
            <person name="Mauceli E."/>
            <person name="Wortman J.R."/>
            <person name="Lee N.H."/>
            <person name="Guigo R."/>
            <person name="Stanke M."/>
            <person name="Alvarado L."/>
            <person name="Amedeo P."/>
            <person name="Antoine C.H."/>
            <person name="Arensburger P."/>
            <person name="Bidwell S.L."/>
            <person name="Crawford M."/>
            <person name="Camaro F."/>
            <person name="Devon K."/>
            <person name="Engels R."/>
            <person name="Hammond M."/>
            <person name="Howarth C."/>
            <person name="Koehrsen M."/>
            <person name="Lawson D."/>
            <person name="Montgomery P."/>
            <person name="Nene V."/>
            <person name="Nusbaum C."/>
            <person name="Puiu D."/>
            <person name="Romero-Severson J."/>
            <person name="Severson D.W."/>
            <person name="Shumway M."/>
            <person name="Sisk P."/>
            <person name="Stolte C."/>
            <person name="Zeng Q."/>
            <person name="Eisenstadt E."/>
            <person name="Fraser-Liggett C."/>
            <person name="Strausberg R."/>
            <person name="Galagan J."/>
            <person name="Birren B."/>
            <person name="Collins F.H."/>
        </authorList>
    </citation>
    <scope>NUCLEOTIDE SEQUENCE [LARGE SCALE GENOMIC DNA]</scope>
    <source>
        <strain evidence="9">JHB</strain>
    </source>
</reference>
<reference evidence="8" key="2">
    <citation type="submission" date="2003-09" db="EMBL/GenBank/DDBJ databases">
        <title>An insight into the salivary transcriptome and proteome of the adult female mosquito Culex pipiens quinquefasciatus.</title>
        <authorList>
            <person name="Ribeiro J.M.C."/>
            <person name="Charlab R."/>
            <person name="Pham V.M."/>
            <person name="Garfield M.K."/>
            <person name="Valenzuela J.G."/>
        </authorList>
    </citation>
    <scope>NUCLEOTIDE SEQUENCE [LARGE SCALE MRNA]</scope>
    <source>
        <strain evidence="8">Vero Beach</strain>
        <tissue evidence="8">Salivary gland</tissue>
    </source>
</reference>
<reference evidence="6" key="3">
    <citation type="journal article" date="2004" name="Insect Biochem. Mol. Biol.">
        <title>An insight into the salivary transcriptome and proteome of the adult female mosquito Culex pipiens quinquefasciatus.</title>
        <authorList>
            <person name="Ribeiro J.M."/>
            <person name="Charlab R."/>
            <person name="Pham V.M."/>
            <person name="Garfield M."/>
            <person name="Valenzuela J.G."/>
        </authorList>
    </citation>
    <scope>TISSUE SPECIFICITY</scope>
</reference>
<reference evidence="6" key="4">
    <citation type="journal article" date="2006" name="J. Exp. Biol.">
        <title>A novel secreted endonuclease from Culex quinquefasciatus salivary glands.</title>
        <authorList>
            <person name="Calvo E."/>
            <person name="Ribeiro J.M."/>
        </authorList>
    </citation>
    <scope>FUNCTION</scope>
    <scope>CATALYTIC ACTIVITY</scope>
    <scope>COFACTOR</scope>
    <scope>SUBCELLULAR LOCATION</scope>
    <scope>TISSUE SPECIFICITY</scope>
</reference>
<evidence type="ECO:0000255" key="1"/>
<evidence type="ECO:0000255" key="2">
    <source>
        <dbReference type="PROSITE-ProRule" id="PRU00498"/>
    </source>
</evidence>
<evidence type="ECO:0000269" key="3">
    <source>
    </source>
</evidence>
<evidence type="ECO:0000269" key="4">
    <source>
    </source>
</evidence>
<evidence type="ECO:0000303" key="5">
    <source>
    </source>
</evidence>
<evidence type="ECO:0000305" key="6"/>
<evidence type="ECO:0000305" key="7">
    <source>
    </source>
</evidence>
<evidence type="ECO:0000312" key="8">
    <source>
        <dbReference type="EMBL" id="AAR18449.1"/>
    </source>
</evidence>
<evidence type="ECO:0000312" key="9">
    <source>
        <dbReference type="EMBL" id="EDS32655.1"/>
    </source>
</evidence>
<comment type="function">
    <text evidence="4 5">Hydrolyzes double-stranded DNA with no sequence specificity (PubMed:16809456). Does not cleave ssDNA and RNA (PubMed:16809456). May facilitate blood meal intake by lowering the local viscosity created by the release of host DNA (PubMed:16809456).</text>
</comment>
<comment type="cofactor">
    <cofactor evidence="4">
        <name>Mg(2+)</name>
        <dbReference type="ChEBI" id="CHEBI:18420"/>
    </cofactor>
</comment>
<comment type="subcellular location">
    <subcellularLocation>
        <location evidence="7">Secreted</location>
    </subcellularLocation>
</comment>
<comment type="tissue specificity">
    <text evidence="3 4">Saliva (at protein level) (PubMed:16809456). Female salivary gland (PubMed:15147756).</text>
</comment>
<comment type="similarity">
    <text evidence="6">Belongs to the DNA/RNA non-specific endonuclease family.</text>
</comment>
<keyword id="KW-0255">Endonuclease</keyword>
<keyword id="KW-0325">Glycoprotein</keyword>
<keyword id="KW-0378">Hydrolase</keyword>
<keyword id="KW-0460">Magnesium</keyword>
<keyword id="KW-0540">Nuclease</keyword>
<keyword id="KW-1185">Reference proteome</keyword>
<keyword id="KW-0964">Secreted</keyword>
<keyword id="KW-0732">Signal</keyword>
<accession>B0WQ10</accession>
<accession>Q6TRY8</accession>
<name>NUC_CULQU</name>
<protein>
    <recommendedName>
        <fullName evidence="5">Salivary endonuclease</fullName>
        <shortName evidence="5">CuquEndo</shortName>
        <ecNumber evidence="4">3.1.-.-</ecNumber>
    </recommendedName>
</protein>
<sequence length="364" mass="41950">MSSFFLSISPLVLALFHVVVQVCSQSCQVAISELQSERKVIILNSDKRSLKQPSNGKYSWKSGESIYFICGKDLKTLTCSPSSINAKRFDCVKPPDVTERDINRECNGKSSKTFQMGFRASGGLFVPYYELCYLMDTCSVSHVKHRLLGASFGGVSGTREKSFQSFVCPGLRYNTHYTQASQKQPDPRFYFQRGHLFPDRDAPVFAWKLATYSYGNCVPQWNTINSEGGNWWTLEYLVFKYAQQTPNTEYTIYDGVLYDPRNKQYLAKQEKKIEIPVWFWKVVTNQTHVLKVFFVSHNLKGTKQTFCNTNRCVNDRAKGTKTVETWDFYNEASRGITHCCYWKDLARKNPLPIEVQREINNKKN</sequence>
<gene>
    <name evidence="9" type="ORF">CpipJ_CPIJ009133</name>
</gene>
<organism>
    <name type="scientific">Culex quinquefasciatus</name>
    <name type="common">Southern house mosquito</name>
    <name type="synonym">Culex pungens</name>
    <dbReference type="NCBI Taxonomy" id="7176"/>
    <lineage>
        <taxon>Eukaryota</taxon>
        <taxon>Metazoa</taxon>
        <taxon>Ecdysozoa</taxon>
        <taxon>Arthropoda</taxon>
        <taxon>Hexapoda</taxon>
        <taxon>Insecta</taxon>
        <taxon>Pterygota</taxon>
        <taxon>Neoptera</taxon>
        <taxon>Endopterygota</taxon>
        <taxon>Diptera</taxon>
        <taxon>Nematocera</taxon>
        <taxon>Culicoidea</taxon>
        <taxon>Culicidae</taxon>
        <taxon>Culicinae</taxon>
        <taxon>Culicini</taxon>
        <taxon>Culex</taxon>
        <taxon>Culex</taxon>
    </lineage>
</organism>
<proteinExistence type="evidence at protein level"/>
<dbReference type="EC" id="3.1.-.-" evidence="4"/>
<dbReference type="EMBL" id="DS232032">
    <property type="protein sequence ID" value="EDS32655.1"/>
    <property type="molecule type" value="Genomic_DNA"/>
</dbReference>
<dbReference type="EMBL" id="AY388561">
    <property type="protein sequence ID" value="AAR18449.1"/>
    <property type="molecule type" value="mRNA"/>
</dbReference>
<dbReference type="RefSeq" id="XP_001850795.1">
    <property type="nucleotide sequence ID" value="XM_001850743.1"/>
</dbReference>
<dbReference type="STRING" id="7176.B0WQ10"/>
<dbReference type="EnsemblMetazoa" id="CPIJ009133-RA">
    <property type="protein sequence ID" value="CPIJ009133-PA"/>
    <property type="gene ID" value="CPIJ009133"/>
</dbReference>
<dbReference type="KEGG" id="cqu:CpipJ_CPIJ009133"/>
<dbReference type="VEuPathDB" id="VectorBase:CPIJ009133"/>
<dbReference type="VEuPathDB" id="VectorBase:CQUJHB002602"/>
<dbReference type="HOGENOM" id="CLU_048495_1_0_1"/>
<dbReference type="InParanoid" id="B0WQ10"/>
<dbReference type="OrthoDB" id="9518664at2759"/>
<dbReference type="Proteomes" id="UP000002320">
    <property type="component" value="Unassembled WGS sequence"/>
</dbReference>
<dbReference type="GO" id="GO:0005576">
    <property type="term" value="C:extracellular region"/>
    <property type="evidence" value="ECO:0000314"/>
    <property type="project" value="UniProtKB"/>
</dbReference>
<dbReference type="GO" id="GO:0005743">
    <property type="term" value="C:mitochondrial inner membrane"/>
    <property type="evidence" value="ECO:0007669"/>
    <property type="project" value="TreeGrafter"/>
</dbReference>
<dbReference type="GO" id="GO:0005634">
    <property type="term" value="C:nucleus"/>
    <property type="evidence" value="ECO:0007669"/>
    <property type="project" value="TreeGrafter"/>
</dbReference>
<dbReference type="GO" id="GO:1990238">
    <property type="term" value="F:double-stranded DNA endonuclease activity"/>
    <property type="evidence" value="ECO:0000314"/>
    <property type="project" value="UniProtKB"/>
</dbReference>
<dbReference type="GO" id="GO:0046872">
    <property type="term" value="F:metal ion binding"/>
    <property type="evidence" value="ECO:0007669"/>
    <property type="project" value="InterPro"/>
</dbReference>
<dbReference type="GO" id="GO:0003676">
    <property type="term" value="F:nucleic acid binding"/>
    <property type="evidence" value="ECO:0007669"/>
    <property type="project" value="InterPro"/>
</dbReference>
<dbReference type="GO" id="GO:0004521">
    <property type="term" value="F:RNA endonuclease activity"/>
    <property type="evidence" value="ECO:0007669"/>
    <property type="project" value="TreeGrafter"/>
</dbReference>
<dbReference type="GO" id="GO:0000014">
    <property type="term" value="F:single-stranded DNA endodeoxyribonuclease activity"/>
    <property type="evidence" value="ECO:0007669"/>
    <property type="project" value="TreeGrafter"/>
</dbReference>
<dbReference type="GO" id="GO:0006309">
    <property type="term" value="P:apoptotic DNA fragmentation"/>
    <property type="evidence" value="ECO:0007669"/>
    <property type="project" value="TreeGrafter"/>
</dbReference>
<dbReference type="Gene3D" id="3.40.570.10">
    <property type="entry name" value="Extracellular Endonuclease, subunit A"/>
    <property type="match status" value="1"/>
</dbReference>
<dbReference type="InterPro" id="IPR044929">
    <property type="entry name" value="DNA/RNA_non-sp_Endonuclease_sf"/>
</dbReference>
<dbReference type="InterPro" id="IPR001604">
    <property type="entry name" value="Endo_G_ENPP1-like_dom"/>
</dbReference>
<dbReference type="InterPro" id="IPR044925">
    <property type="entry name" value="His-Me_finger_sf"/>
</dbReference>
<dbReference type="InterPro" id="IPR040255">
    <property type="entry name" value="Non-specific_endonuclease"/>
</dbReference>
<dbReference type="PANTHER" id="PTHR13966">
    <property type="entry name" value="ENDONUCLEASE RELATED"/>
    <property type="match status" value="1"/>
</dbReference>
<dbReference type="PANTHER" id="PTHR13966:SF17">
    <property type="entry name" value="ENDONUCLEASE-RELATED"/>
    <property type="match status" value="1"/>
</dbReference>
<dbReference type="Pfam" id="PF01223">
    <property type="entry name" value="Endonuclease_NS"/>
    <property type="match status" value="1"/>
</dbReference>
<dbReference type="SMART" id="SM00892">
    <property type="entry name" value="Endonuclease_NS"/>
    <property type="match status" value="1"/>
</dbReference>
<dbReference type="SUPFAM" id="SSF54060">
    <property type="entry name" value="His-Me finger endonucleases"/>
    <property type="match status" value="1"/>
</dbReference>